<reference key="1">
    <citation type="submission" date="2000-05" db="PIR data bank">
        <authorList>
            <person name="Wang C.-G."/>
        </authorList>
    </citation>
    <scope>PROTEIN SEQUENCE</scope>
</reference>
<feature type="peptide" id="PRO_0000044943" description="Neurotoxin BmK A3-6">
    <location>
        <begin position="1"/>
        <end position="29"/>
    </location>
</feature>
<sequence length="29" mass="3331">LPYPVNCKTECECVMCGLGIICKQCYYQQ</sequence>
<evidence type="ECO:0000250" key="1"/>
<evidence type="ECO:0000305" key="2"/>
<name>SCK6_OLIMR</name>
<protein>
    <recommendedName>
        <fullName>Neurotoxin BmK A3-6</fullName>
    </recommendedName>
</protein>
<organism>
    <name type="scientific">Olivierus martensii</name>
    <name type="common">Manchurian scorpion</name>
    <name type="synonym">Mesobuthus martensii</name>
    <dbReference type="NCBI Taxonomy" id="34649"/>
    <lineage>
        <taxon>Eukaryota</taxon>
        <taxon>Metazoa</taxon>
        <taxon>Ecdysozoa</taxon>
        <taxon>Arthropoda</taxon>
        <taxon>Chelicerata</taxon>
        <taxon>Arachnida</taxon>
        <taxon>Scorpiones</taxon>
        <taxon>Buthida</taxon>
        <taxon>Buthoidea</taxon>
        <taxon>Buthidae</taxon>
        <taxon>Olivierus</taxon>
    </lineage>
</organism>
<proteinExistence type="evidence at protein level"/>
<accession>Q7M463</accession>
<comment type="subcellular location">
    <subcellularLocation>
        <location>Secreted</location>
    </subcellularLocation>
</comment>
<comment type="tissue specificity">
    <text>Expressed by the venom gland.</text>
</comment>
<comment type="PTM">
    <text evidence="2">Contains 3 disulfide bonds.</text>
</comment>
<comment type="miscellaneous">
    <text evidence="1">Negative results: does not show any effect on Na(+), Ca(2+) currents, nor on voltage-gated and calcium-activated potassium channels.</text>
</comment>
<dbReference type="PIR" id="A59278">
    <property type="entry name" value="A59278"/>
</dbReference>
<dbReference type="SMR" id="Q7M463"/>
<dbReference type="GO" id="GO:0005576">
    <property type="term" value="C:extracellular region"/>
    <property type="evidence" value="ECO:0007669"/>
    <property type="project" value="UniProtKB-SubCell"/>
</dbReference>
<dbReference type="InterPro" id="IPR036574">
    <property type="entry name" value="Scorpion_toxin-like_sf"/>
</dbReference>
<dbReference type="SUPFAM" id="SSF57095">
    <property type="entry name" value="Scorpion toxin-like"/>
    <property type="match status" value="1"/>
</dbReference>
<keyword id="KW-0903">Direct protein sequencing</keyword>
<keyword id="KW-1015">Disulfide bond</keyword>
<keyword id="KW-0964">Secreted</keyword>